<feature type="chain" id="PRO_0000167778" description="Pyridoxine/pyridoxamine 5'-phosphate oxidase">
    <location>
        <begin position="1"/>
        <end position="208"/>
    </location>
</feature>
<feature type="binding site" evidence="1">
    <location>
        <begin position="53"/>
        <end position="58"/>
    </location>
    <ligand>
        <name>FMN</name>
        <dbReference type="ChEBI" id="CHEBI:58210"/>
    </ligand>
</feature>
<feature type="binding site" evidence="1">
    <location>
        <position position="58"/>
    </location>
    <ligand>
        <name>substrate</name>
    </ligand>
</feature>
<feature type="binding site" evidence="1">
    <location>
        <begin position="68"/>
        <end position="69"/>
    </location>
    <ligand>
        <name>FMN</name>
        <dbReference type="ChEBI" id="CHEBI:58210"/>
    </ligand>
</feature>
<feature type="binding site" evidence="1">
    <location>
        <position position="75"/>
    </location>
    <ligand>
        <name>FMN</name>
        <dbReference type="ChEBI" id="CHEBI:58210"/>
    </ligand>
</feature>
<feature type="binding site" evidence="1">
    <location>
        <position position="100"/>
    </location>
    <ligand>
        <name>FMN</name>
        <dbReference type="ChEBI" id="CHEBI:58210"/>
    </ligand>
</feature>
<feature type="binding site" evidence="1">
    <location>
        <position position="118"/>
    </location>
    <ligand>
        <name>substrate</name>
    </ligand>
</feature>
<feature type="binding site" evidence="1">
    <location>
        <position position="122"/>
    </location>
    <ligand>
        <name>substrate</name>
    </ligand>
</feature>
<feature type="binding site" evidence="1">
    <location>
        <position position="126"/>
    </location>
    <ligand>
        <name>substrate</name>
    </ligand>
</feature>
<feature type="binding site" evidence="1">
    <location>
        <begin position="135"/>
        <end position="136"/>
    </location>
    <ligand>
        <name>FMN</name>
        <dbReference type="ChEBI" id="CHEBI:58210"/>
    </ligand>
</feature>
<feature type="binding site" evidence="1">
    <location>
        <position position="180"/>
    </location>
    <ligand>
        <name>FMN</name>
        <dbReference type="ChEBI" id="CHEBI:58210"/>
    </ligand>
</feature>
<feature type="binding site" evidence="1">
    <location>
        <begin position="186"/>
        <end position="188"/>
    </location>
    <ligand>
        <name>substrate</name>
    </ligand>
</feature>
<feature type="binding site" evidence="1">
    <location>
        <position position="190"/>
    </location>
    <ligand>
        <name>FMN</name>
        <dbReference type="ChEBI" id="CHEBI:58210"/>
    </ligand>
</feature>
<evidence type="ECO:0000255" key="1">
    <source>
        <dbReference type="HAMAP-Rule" id="MF_01629"/>
    </source>
</evidence>
<name>PDXH_XYLFT</name>
<accession>Q87DU7</accession>
<comment type="function">
    <text evidence="1">Catalyzes the oxidation of either pyridoxine 5'-phosphate (PNP) or pyridoxamine 5'-phosphate (PMP) into pyridoxal 5'-phosphate (PLP).</text>
</comment>
<comment type="catalytic activity">
    <reaction evidence="1">
        <text>pyridoxamine 5'-phosphate + O2 + H2O = pyridoxal 5'-phosphate + H2O2 + NH4(+)</text>
        <dbReference type="Rhea" id="RHEA:15817"/>
        <dbReference type="ChEBI" id="CHEBI:15377"/>
        <dbReference type="ChEBI" id="CHEBI:15379"/>
        <dbReference type="ChEBI" id="CHEBI:16240"/>
        <dbReference type="ChEBI" id="CHEBI:28938"/>
        <dbReference type="ChEBI" id="CHEBI:58451"/>
        <dbReference type="ChEBI" id="CHEBI:597326"/>
        <dbReference type="EC" id="1.4.3.5"/>
    </reaction>
</comment>
<comment type="catalytic activity">
    <reaction evidence="1">
        <text>pyridoxine 5'-phosphate + O2 = pyridoxal 5'-phosphate + H2O2</text>
        <dbReference type="Rhea" id="RHEA:15149"/>
        <dbReference type="ChEBI" id="CHEBI:15379"/>
        <dbReference type="ChEBI" id="CHEBI:16240"/>
        <dbReference type="ChEBI" id="CHEBI:58589"/>
        <dbReference type="ChEBI" id="CHEBI:597326"/>
        <dbReference type="EC" id="1.4.3.5"/>
    </reaction>
</comment>
<comment type="cofactor">
    <cofactor evidence="1">
        <name>FMN</name>
        <dbReference type="ChEBI" id="CHEBI:58210"/>
    </cofactor>
    <text evidence="1">Binds 1 FMN per subunit.</text>
</comment>
<comment type="pathway">
    <text evidence="1">Cofactor metabolism; pyridoxal 5'-phosphate salvage; pyridoxal 5'-phosphate from pyridoxamine 5'-phosphate: step 1/1.</text>
</comment>
<comment type="pathway">
    <text evidence="1">Cofactor metabolism; pyridoxal 5'-phosphate salvage; pyridoxal 5'-phosphate from pyridoxine 5'-phosphate: step 1/1.</text>
</comment>
<comment type="subunit">
    <text evidence="1">Homodimer.</text>
</comment>
<comment type="similarity">
    <text evidence="1">Belongs to the pyridoxamine 5'-phosphate oxidase family.</text>
</comment>
<sequence length="208" mass="23810">MIFPCLFQSMLNLYAEALSTFSLLFEEAKSSSEIEPDAMMLATASLEGHPSVRTVLLKKFDARGFVFYSHLDSPKGRDLQANPQAALLFLWRSLREAGVQVRIEGRVQQVLAEEADAYFASRPRQSQIGAWASMQSCPLGSPEEFQARLAEVKAMFEGRDVPRPEEWVGFRVVPQVFEFWYGASFRLHERWRYQADAAGYWRKSLLYP</sequence>
<dbReference type="EC" id="1.4.3.5" evidence="1"/>
<dbReference type="EMBL" id="AE009442">
    <property type="protein sequence ID" value="AAO28456.1"/>
    <property type="molecule type" value="Genomic_DNA"/>
</dbReference>
<dbReference type="SMR" id="Q87DU7"/>
<dbReference type="KEGG" id="xft:PD_0583"/>
<dbReference type="HOGENOM" id="CLU_032263_2_3_6"/>
<dbReference type="UniPathway" id="UPA01068">
    <property type="reaction ID" value="UER00304"/>
</dbReference>
<dbReference type="UniPathway" id="UPA01068">
    <property type="reaction ID" value="UER00305"/>
</dbReference>
<dbReference type="Proteomes" id="UP000002516">
    <property type="component" value="Chromosome"/>
</dbReference>
<dbReference type="GO" id="GO:0010181">
    <property type="term" value="F:FMN binding"/>
    <property type="evidence" value="ECO:0007669"/>
    <property type="project" value="UniProtKB-UniRule"/>
</dbReference>
<dbReference type="GO" id="GO:0004733">
    <property type="term" value="F:pyridoxamine phosphate oxidase activity"/>
    <property type="evidence" value="ECO:0007669"/>
    <property type="project" value="UniProtKB-UniRule"/>
</dbReference>
<dbReference type="GO" id="GO:0008615">
    <property type="term" value="P:pyridoxine biosynthetic process"/>
    <property type="evidence" value="ECO:0007669"/>
    <property type="project" value="UniProtKB-KW"/>
</dbReference>
<dbReference type="FunFam" id="2.30.110.10:FF:000012">
    <property type="entry name" value="Predicted protein"/>
    <property type="match status" value="1"/>
</dbReference>
<dbReference type="Gene3D" id="2.30.110.10">
    <property type="entry name" value="Electron Transport, Fmn-binding Protein, Chain A"/>
    <property type="match status" value="1"/>
</dbReference>
<dbReference type="HAMAP" id="MF_01629">
    <property type="entry name" value="PdxH"/>
    <property type="match status" value="1"/>
</dbReference>
<dbReference type="InterPro" id="IPR000659">
    <property type="entry name" value="Pyridox_Oxase"/>
</dbReference>
<dbReference type="InterPro" id="IPR019740">
    <property type="entry name" value="Pyridox_Oxase_CS"/>
</dbReference>
<dbReference type="InterPro" id="IPR011576">
    <property type="entry name" value="Pyridox_Oxase_N"/>
</dbReference>
<dbReference type="InterPro" id="IPR019576">
    <property type="entry name" value="Pyridoxamine_oxidase_dimer_C"/>
</dbReference>
<dbReference type="InterPro" id="IPR012349">
    <property type="entry name" value="Split_barrel_FMN-bd"/>
</dbReference>
<dbReference type="NCBIfam" id="TIGR00558">
    <property type="entry name" value="pdxH"/>
    <property type="match status" value="1"/>
</dbReference>
<dbReference type="NCBIfam" id="NF004231">
    <property type="entry name" value="PRK05679.1"/>
    <property type="match status" value="1"/>
</dbReference>
<dbReference type="PANTHER" id="PTHR10851:SF0">
    <property type="entry name" value="PYRIDOXINE-5'-PHOSPHATE OXIDASE"/>
    <property type="match status" value="1"/>
</dbReference>
<dbReference type="PANTHER" id="PTHR10851">
    <property type="entry name" value="PYRIDOXINE-5-PHOSPHATE OXIDASE"/>
    <property type="match status" value="1"/>
</dbReference>
<dbReference type="Pfam" id="PF10590">
    <property type="entry name" value="PNP_phzG_C"/>
    <property type="match status" value="1"/>
</dbReference>
<dbReference type="Pfam" id="PF01243">
    <property type="entry name" value="PNPOx_N"/>
    <property type="match status" value="1"/>
</dbReference>
<dbReference type="PIRSF" id="PIRSF000190">
    <property type="entry name" value="Pyd_amn-ph_oxd"/>
    <property type="match status" value="1"/>
</dbReference>
<dbReference type="SUPFAM" id="SSF50475">
    <property type="entry name" value="FMN-binding split barrel"/>
    <property type="match status" value="1"/>
</dbReference>
<dbReference type="PROSITE" id="PS01064">
    <property type="entry name" value="PYRIDOX_OXIDASE"/>
    <property type="match status" value="1"/>
</dbReference>
<organism>
    <name type="scientific">Xylella fastidiosa (strain Temecula1 / ATCC 700964)</name>
    <dbReference type="NCBI Taxonomy" id="183190"/>
    <lineage>
        <taxon>Bacteria</taxon>
        <taxon>Pseudomonadati</taxon>
        <taxon>Pseudomonadota</taxon>
        <taxon>Gammaproteobacteria</taxon>
        <taxon>Lysobacterales</taxon>
        <taxon>Lysobacteraceae</taxon>
        <taxon>Xylella</taxon>
    </lineage>
</organism>
<proteinExistence type="inferred from homology"/>
<keyword id="KW-0285">Flavoprotein</keyword>
<keyword id="KW-0288">FMN</keyword>
<keyword id="KW-0560">Oxidoreductase</keyword>
<keyword id="KW-0664">Pyridoxine biosynthesis</keyword>
<keyword id="KW-1185">Reference proteome</keyword>
<reference key="1">
    <citation type="journal article" date="2003" name="J. Bacteriol.">
        <title>Comparative analyses of the complete genome sequences of Pierce's disease and citrus variegated chlorosis strains of Xylella fastidiosa.</title>
        <authorList>
            <person name="Van Sluys M.A."/>
            <person name="de Oliveira M.C."/>
            <person name="Monteiro-Vitorello C.B."/>
            <person name="Miyaki C.Y."/>
            <person name="Furlan L.R."/>
            <person name="Camargo L.E.A."/>
            <person name="da Silva A.C.R."/>
            <person name="Moon D.H."/>
            <person name="Takita M.A."/>
            <person name="Lemos E.G.M."/>
            <person name="Machado M.A."/>
            <person name="Ferro M.I.T."/>
            <person name="da Silva F.R."/>
            <person name="Goldman M.H.S."/>
            <person name="Goldman G.H."/>
            <person name="Lemos M.V.F."/>
            <person name="El-Dorry H."/>
            <person name="Tsai S.M."/>
            <person name="Carrer H."/>
            <person name="Carraro D.M."/>
            <person name="de Oliveira R.C."/>
            <person name="Nunes L.R."/>
            <person name="Siqueira W.J."/>
            <person name="Coutinho L.L."/>
            <person name="Kimura E.T."/>
            <person name="Ferro E.S."/>
            <person name="Harakava R."/>
            <person name="Kuramae E.E."/>
            <person name="Marino C.L."/>
            <person name="Giglioti E."/>
            <person name="Abreu I.L."/>
            <person name="Alves L.M.C."/>
            <person name="do Amaral A.M."/>
            <person name="Baia G.S."/>
            <person name="Blanco S.R."/>
            <person name="Brito M.S."/>
            <person name="Cannavan F.S."/>
            <person name="Celestino A.V."/>
            <person name="da Cunha A.F."/>
            <person name="Fenille R.C."/>
            <person name="Ferro J.A."/>
            <person name="Formighieri E.F."/>
            <person name="Kishi L.T."/>
            <person name="Leoni S.G."/>
            <person name="Oliveira A.R."/>
            <person name="Rosa V.E. Jr."/>
            <person name="Sassaki F.T."/>
            <person name="Sena J.A.D."/>
            <person name="de Souza A.A."/>
            <person name="Truffi D."/>
            <person name="Tsukumo F."/>
            <person name="Yanai G.M."/>
            <person name="Zaros L.G."/>
            <person name="Civerolo E.L."/>
            <person name="Simpson A.J.G."/>
            <person name="Almeida N.F. Jr."/>
            <person name="Setubal J.C."/>
            <person name="Kitajima J.P."/>
        </authorList>
    </citation>
    <scope>NUCLEOTIDE SEQUENCE [LARGE SCALE GENOMIC DNA]</scope>
    <source>
        <strain>Temecula1 / ATCC 700964</strain>
    </source>
</reference>
<protein>
    <recommendedName>
        <fullName evidence="1">Pyridoxine/pyridoxamine 5'-phosphate oxidase</fullName>
        <ecNumber evidence="1">1.4.3.5</ecNumber>
    </recommendedName>
    <alternativeName>
        <fullName evidence="1">PNP/PMP oxidase</fullName>
        <shortName evidence="1">PNPOx</shortName>
    </alternativeName>
    <alternativeName>
        <fullName evidence="1">Pyridoxal 5'-phosphate synthase</fullName>
    </alternativeName>
</protein>
<gene>
    <name evidence="1" type="primary">pdxH</name>
    <name type="ordered locus">PD_0583</name>
</gene>